<name>AROK_THEAC</name>
<comment type="catalytic activity">
    <reaction>
        <text>shikimate + ATP = 3-phosphoshikimate + ADP + H(+)</text>
        <dbReference type="Rhea" id="RHEA:13121"/>
        <dbReference type="ChEBI" id="CHEBI:15378"/>
        <dbReference type="ChEBI" id="CHEBI:30616"/>
        <dbReference type="ChEBI" id="CHEBI:36208"/>
        <dbReference type="ChEBI" id="CHEBI:145989"/>
        <dbReference type="ChEBI" id="CHEBI:456216"/>
        <dbReference type="EC" id="2.7.1.71"/>
    </reaction>
</comment>
<comment type="pathway">
    <text>Metabolic intermediate biosynthesis; chorismate biosynthesis; chorismate from D-erythrose 4-phosphate and phosphoenolpyruvate: step 5/7.</text>
</comment>
<comment type="subcellular location">
    <subcellularLocation>
        <location evidence="1">Cytoplasm</location>
    </subcellularLocation>
</comment>
<comment type="similarity">
    <text evidence="3">Belongs to the GHMP kinase family. Archaeal shikimate kinase subfamily.</text>
</comment>
<reference key="1">
    <citation type="journal article" date="2000" name="Nature">
        <title>The genome sequence of the thermoacidophilic scavenger Thermoplasma acidophilum.</title>
        <authorList>
            <person name="Ruepp A."/>
            <person name="Graml W."/>
            <person name="Santos-Martinez M.-L."/>
            <person name="Koretke K.K."/>
            <person name="Volker C."/>
            <person name="Mewes H.-W."/>
            <person name="Frishman D."/>
            <person name="Stocker S."/>
            <person name="Lupas A.N."/>
            <person name="Baumeister W."/>
        </authorList>
    </citation>
    <scope>NUCLEOTIDE SEQUENCE [LARGE SCALE GENOMIC DNA]</scope>
    <source>
        <strain>ATCC 25905 / DSM 1728 / JCM 9062 / NBRC 15155 / AMRC-C165</strain>
    </source>
</reference>
<keyword id="KW-0028">Amino-acid biosynthesis</keyword>
<keyword id="KW-0057">Aromatic amino acid biosynthesis</keyword>
<keyword id="KW-0067">ATP-binding</keyword>
<keyword id="KW-0963">Cytoplasm</keyword>
<keyword id="KW-0418">Kinase</keyword>
<keyword id="KW-0547">Nucleotide-binding</keyword>
<keyword id="KW-1185">Reference proteome</keyword>
<keyword id="KW-0808">Transferase</keyword>
<organism>
    <name type="scientific">Thermoplasma acidophilum (strain ATCC 25905 / DSM 1728 / JCM 9062 / NBRC 15155 / AMRC-C165)</name>
    <dbReference type="NCBI Taxonomy" id="273075"/>
    <lineage>
        <taxon>Archaea</taxon>
        <taxon>Methanobacteriati</taxon>
        <taxon>Thermoplasmatota</taxon>
        <taxon>Thermoplasmata</taxon>
        <taxon>Thermoplasmatales</taxon>
        <taxon>Thermoplasmataceae</taxon>
        <taxon>Thermoplasma</taxon>
    </lineage>
</organism>
<sequence>MKYARVRTHGGVSIISAFIDGMGGAFSIDVPMTVTVREGTCSEEKKISEDIRRYLSIATCFRFTVDSRIPSGYGLKSSSAYILALAKAMAVYSGIDISDMEIMTASADISKNSGLSMTGALDDLCQAMYGGYCLTDNRKMKILRRGRLPEMPVLVCADGDKRSSGKVSIEGHFTNAIRRVEDLAFKGRIFDAAVANGLIYGSIFGMDLRLIGSMLKAGALYSSQSGKGPAIFGIFADRRSAMNARSDIGFGIVTKINNQGIRYWKYDS</sequence>
<protein>
    <recommendedName>
        <fullName>Shikimate kinase</fullName>
        <shortName>SK</shortName>
        <ecNumber>2.7.1.71</ecNumber>
    </recommendedName>
</protein>
<proteinExistence type="inferred from homology"/>
<accession>Q9HLE5</accession>
<feature type="chain" id="PRO_0000141580" description="Shikimate kinase">
    <location>
        <begin position="1"/>
        <end position="268"/>
    </location>
</feature>
<feature type="binding site" evidence="2">
    <location>
        <begin position="70"/>
        <end position="80"/>
    </location>
    <ligand>
        <name>ATP</name>
        <dbReference type="ChEBI" id="CHEBI:30616"/>
    </ligand>
</feature>
<dbReference type="EC" id="2.7.1.71"/>
<dbReference type="EMBL" id="AL445063">
    <property type="protein sequence ID" value="CAC11428.1"/>
    <property type="molecule type" value="Genomic_DNA"/>
</dbReference>
<dbReference type="RefSeq" id="WP_010900712.1">
    <property type="nucleotide sequence ID" value="NC_002578.1"/>
</dbReference>
<dbReference type="SMR" id="Q9HLE5"/>
<dbReference type="FunCoup" id="Q9HLE5">
    <property type="interactions" value="52"/>
</dbReference>
<dbReference type="STRING" id="273075.gene:9571500"/>
<dbReference type="PaxDb" id="273075-Ta0283"/>
<dbReference type="EnsemblBacteria" id="CAC11428">
    <property type="protein sequence ID" value="CAC11428"/>
    <property type="gene ID" value="CAC11428"/>
</dbReference>
<dbReference type="KEGG" id="tac:Ta0283"/>
<dbReference type="eggNOG" id="arCOG01025">
    <property type="taxonomic scope" value="Archaea"/>
</dbReference>
<dbReference type="HOGENOM" id="CLU_073768_0_0_2"/>
<dbReference type="InParanoid" id="Q9HLE5"/>
<dbReference type="OrthoDB" id="9602at2157"/>
<dbReference type="UniPathway" id="UPA00053">
    <property type="reaction ID" value="UER00088"/>
</dbReference>
<dbReference type="Proteomes" id="UP000001024">
    <property type="component" value="Chromosome"/>
</dbReference>
<dbReference type="GO" id="GO:0005737">
    <property type="term" value="C:cytoplasm"/>
    <property type="evidence" value="ECO:0007669"/>
    <property type="project" value="UniProtKB-SubCell"/>
</dbReference>
<dbReference type="GO" id="GO:0005524">
    <property type="term" value="F:ATP binding"/>
    <property type="evidence" value="ECO:0007669"/>
    <property type="project" value="UniProtKB-UniRule"/>
</dbReference>
<dbReference type="GO" id="GO:0004765">
    <property type="term" value="F:shikimate kinase activity"/>
    <property type="evidence" value="ECO:0007669"/>
    <property type="project" value="UniProtKB-UniRule"/>
</dbReference>
<dbReference type="GO" id="GO:0008652">
    <property type="term" value="P:amino acid biosynthetic process"/>
    <property type="evidence" value="ECO:0007669"/>
    <property type="project" value="UniProtKB-KW"/>
</dbReference>
<dbReference type="GO" id="GO:0009073">
    <property type="term" value="P:aromatic amino acid family biosynthetic process"/>
    <property type="evidence" value="ECO:0007669"/>
    <property type="project" value="UniProtKB-KW"/>
</dbReference>
<dbReference type="GO" id="GO:0009423">
    <property type="term" value="P:chorismate biosynthetic process"/>
    <property type="evidence" value="ECO:0007669"/>
    <property type="project" value="UniProtKB-UniRule"/>
</dbReference>
<dbReference type="Gene3D" id="3.30.230.10">
    <property type="match status" value="1"/>
</dbReference>
<dbReference type="HAMAP" id="MF_00370">
    <property type="entry name" value="Shik_kinase_arch"/>
    <property type="match status" value="1"/>
</dbReference>
<dbReference type="InterPro" id="IPR013750">
    <property type="entry name" value="GHMP_kinase_C_dom"/>
</dbReference>
<dbReference type="InterPro" id="IPR006204">
    <property type="entry name" value="GHMP_kinase_N_dom"/>
</dbReference>
<dbReference type="InterPro" id="IPR020568">
    <property type="entry name" value="Ribosomal_Su5_D2-typ_SF"/>
</dbReference>
<dbReference type="InterPro" id="IPR014721">
    <property type="entry name" value="Ribsml_uS5_D2-typ_fold_subgr"/>
</dbReference>
<dbReference type="InterPro" id="IPR010189">
    <property type="entry name" value="SK_arc"/>
</dbReference>
<dbReference type="NCBIfam" id="TIGR01920">
    <property type="entry name" value="Shik_kin_archae"/>
    <property type="match status" value="1"/>
</dbReference>
<dbReference type="PANTHER" id="PTHR20861">
    <property type="entry name" value="HOMOSERINE/4-DIPHOSPHOCYTIDYL-2-C-METHYL-D-ERYTHRITOL KINASE"/>
    <property type="match status" value="1"/>
</dbReference>
<dbReference type="PANTHER" id="PTHR20861:SF3">
    <property type="entry name" value="SHIKIMATE KINASE"/>
    <property type="match status" value="1"/>
</dbReference>
<dbReference type="Pfam" id="PF08544">
    <property type="entry name" value="GHMP_kinases_C"/>
    <property type="match status" value="1"/>
</dbReference>
<dbReference type="Pfam" id="PF00288">
    <property type="entry name" value="GHMP_kinases_N"/>
    <property type="match status" value="1"/>
</dbReference>
<dbReference type="PIRSF" id="PIRSF005758">
    <property type="entry name" value="Shikimt_kin_arch"/>
    <property type="match status" value="1"/>
</dbReference>
<dbReference type="SUPFAM" id="SSF54211">
    <property type="entry name" value="Ribosomal protein S5 domain 2-like"/>
    <property type="match status" value="1"/>
</dbReference>
<evidence type="ECO:0000250" key="1"/>
<evidence type="ECO:0000255" key="2"/>
<evidence type="ECO:0000305" key="3"/>
<gene>
    <name type="primary">aroK</name>
    <name type="ordered locus">Ta0283</name>
</gene>